<name>MSBA_VIBVY</name>
<gene>
    <name evidence="1" type="primary">msbA</name>
    <name type="ordered locus">VV2357</name>
</gene>
<dbReference type="EC" id="7.5.2.6" evidence="1"/>
<dbReference type="EMBL" id="BA000037">
    <property type="protein sequence ID" value="BAC95120.1"/>
    <property type="status" value="ALT_INIT"/>
    <property type="molecule type" value="Genomic_DNA"/>
</dbReference>
<dbReference type="RefSeq" id="WP_043877274.1">
    <property type="nucleotide sequence ID" value="NC_005139.1"/>
</dbReference>
<dbReference type="SMR" id="Q7MJ07"/>
<dbReference type="STRING" id="672.VV93_v1c20660"/>
<dbReference type="KEGG" id="vvy:VV2357"/>
<dbReference type="eggNOG" id="COG1132">
    <property type="taxonomic scope" value="Bacteria"/>
</dbReference>
<dbReference type="HOGENOM" id="CLU_000604_84_3_6"/>
<dbReference type="Proteomes" id="UP000002675">
    <property type="component" value="Chromosome I"/>
</dbReference>
<dbReference type="GO" id="GO:0005886">
    <property type="term" value="C:plasma membrane"/>
    <property type="evidence" value="ECO:0007669"/>
    <property type="project" value="UniProtKB-SubCell"/>
</dbReference>
<dbReference type="GO" id="GO:0015421">
    <property type="term" value="F:ABC-type oligopeptide transporter activity"/>
    <property type="evidence" value="ECO:0007669"/>
    <property type="project" value="TreeGrafter"/>
</dbReference>
<dbReference type="GO" id="GO:0005524">
    <property type="term" value="F:ATP binding"/>
    <property type="evidence" value="ECO:0007669"/>
    <property type="project" value="UniProtKB-KW"/>
</dbReference>
<dbReference type="GO" id="GO:0016887">
    <property type="term" value="F:ATP hydrolysis activity"/>
    <property type="evidence" value="ECO:0007669"/>
    <property type="project" value="InterPro"/>
</dbReference>
<dbReference type="GO" id="GO:0034040">
    <property type="term" value="F:ATPase-coupled lipid transmembrane transporter activity"/>
    <property type="evidence" value="ECO:0007669"/>
    <property type="project" value="InterPro"/>
</dbReference>
<dbReference type="CDD" id="cd18552">
    <property type="entry name" value="ABC_6TM_MsbA_like"/>
    <property type="match status" value="1"/>
</dbReference>
<dbReference type="CDD" id="cd03251">
    <property type="entry name" value="ABCC_MsbA"/>
    <property type="match status" value="1"/>
</dbReference>
<dbReference type="FunFam" id="3.40.50.300:FF:000140">
    <property type="entry name" value="Lipid A export ATP-binding/permease protein MsbA"/>
    <property type="match status" value="1"/>
</dbReference>
<dbReference type="Gene3D" id="1.20.1560.10">
    <property type="entry name" value="ABC transporter type 1, transmembrane domain"/>
    <property type="match status" value="1"/>
</dbReference>
<dbReference type="Gene3D" id="3.40.50.300">
    <property type="entry name" value="P-loop containing nucleotide triphosphate hydrolases"/>
    <property type="match status" value="1"/>
</dbReference>
<dbReference type="InterPro" id="IPR003593">
    <property type="entry name" value="AAA+_ATPase"/>
</dbReference>
<dbReference type="InterPro" id="IPR011527">
    <property type="entry name" value="ABC1_TM_dom"/>
</dbReference>
<dbReference type="InterPro" id="IPR036640">
    <property type="entry name" value="ABC1_TM_sf"/>
</dbReference>
<dbReference type="InterPro" id="IPR003439">
    <property type="entry name" value="ABC_transporter-like_ATP-bd"/>
</dbReference>
<dbReference type="InterPro" id="IPR017871">
    <property type="entry name" value="ABC_transporter-like_CS"/>
</dbReference>
<dbReference type="InterPro" id="IPR011917">
    <property type="entry name" value="ABC_transpr_lipidA"/>
</dbReference>
<dbReference type="InterPro" id="IPR027417">
    <property type="entry name" value="P-loop_NTPase"/>
</dbReference>
<dbReference type="InterPro" id="IPR039421">
    <property type="entry name" value="Type_1_exporter"/>
</dbReference>
<dbReference type="NCBIfam" id="TIGR02203">
    <property type="entry name" value="MsbA_lipidA"/>
    <property type="match status" value="1"/>
</dbReference>
<dbReference type="NCBIfam" id="NF008381">
    <property type="entry name" value="PRK11176.1"/>
    <property type="match status" value="1"/>
</dbReference>
<dbReference type="PANTHER" id="PTHR43394:SF1">
    <property type="entry name" value="ATP-BINDING CASSETTE SUB-FAMILY B MEMBER 10, MITOCHONDRIAL"/>
    <property type="match status" value="1"/>
</dbReference>
<dbReference type="PANTHER" id="PTHR43394">
    <property type="entry name" value="ATP-DEPENDENT PERMEASE MDL1, MITOCHONDRIAL"/>
    <property type="match status" value="1"/>
</dbReference>
<dbReference type="Pfam" id="PF00664">
    <property type="entry name" value="ABC_membrane"/>
    <property type="match status" value="1"/>
</dbReference>
<dbReference type="Pfam" id="PF00005">
    <property type="entry name" value="ABC_tran"/>
    <property type="match status" value="1"/>
</dbReference>
<dbReference type="SMART" id="SM00382">
    <property type="entry name" value="AAA"/>
    <property type="match status" value="1"/>
</dbReference>
<dbReference type="SUPFAM" id="SSF90123">
    <property type="entry name" value="ABC transporter transmembrane region"/>
    <property type="match status" value="1"/>
</dbReference>
<dbReference type="SUPFAM" id="SSF52540">
    <property type="entry name" value="P-loop containing nucleoside triphosphate hydrolases"/>
    <property type="match status" value="1"/>
</dbReference>
<dbReference type="PROSITE" id="PS50929">
    <property type="entry name" value="ABC_TM1F"/>
    <property type="match status" value="1"/>
</dbReference>
<dbReference type="PROSITE" id="PS00211">
    <property type="entry name" value="ABC_TRANSPORTER_1"/>
    <property type="match status" value="1"/>
</dbReference>
<dbReference type="PROSITE" id="PS50893">
    <property type="entry name" value="ABC_TRANSPORTER_2"/>
    <property type="match status" value="1"/>
</dbReference>
<dbReference type="PROSITE" id="PS51239">
    <property type="entry name" value="MSBA"/>
    <property type="match status" value="1"/>
</dbReference>
<proteinExistence type="inferred from homology"/>
<protein>
    <recommendedName>
        <fullName evidence="1">ATP-dependent lipid A-core flippase</fullName>
        <ecNumber evidence="1">7.5.2.6</ecNumber>
    </recommendedName>
    <alternativeName>
        <fullName evidence="1">Lipid A export ATP-binding/permease protein MsbA</fullName>
    </alternativeName>
</protein>
<sequence>MSINTDESTWRTFKRLWTFIRLYKSGLAVAVVALIINAVSDTYMVSLLKPLLDEGFGSAESDFLRTLPLLVFGLMFIRGISSFVSTYCLSWVSGNVVMQVRRMVFNHYMQMPVSYFDKEKSGSLLSRITYDSEQVSAATSQALVSIVREGTSIIGLLVLMFYNSWQLSLVLILVAPVVAWAIGFVSKRFRKISKNMQTTMGIVTSSAEQMLKGHKVVLSYGGQEVEKSRFDVVSNQMRQQSMKLITAQAAANPIIQMIASIAIVVVLYLASVDTIKDQLTPGTFTVVFSAMFGLMRPLKALTNVTSQFQRGMAAAQTLFALVDLEPEKNTGTYSVERAKGEVNVKDISFTYEGAEKPALSHVSFDIPRGKTVALVGRSGSGKSTIANLFTRFYDVDSGEIQLDGVDVRDYELKNLRTQFALVSQNVHLFNDTIANNIAYAAGDKYSREDIERAAELAHAMEFISKMENGLDTVVGENGASLSGGQRQRVAIARALLRDAPVLILDEATSALDTESERAIQSALDELQKNKTVLVIAHRLSTIEKADQILVIDDGAVVERGSHSELIEKDGAYAQLHRIQFGEG</sequence>
<feature type="chain" id="PRO_0000092604" description="ATP-dependent lipid A-core flippase">
    <location>
        <begin position="1"/>
        <end position="583"/>
    </location>
</feature>
<feature type="transmembrane region" description="Helical" evidence="1">
    <location>
        <begin position="27"/>
        <end position="47"/>
    </location>
</feature>
<feature type="transmembrane region" description="Helical" evidence="1">
    <location>
        <begin position="69"/>
        <end position="89"/>
    </location>
</feature>
<feature type="transmembrane region" description="Helical" evidence="1">
    <location>
        <begin position="142"/>
        <end position="162"/>
    </location>
</feature>
<feature type="transmembrane region" description="Helical" evidence="1">
    <location>
        <begin position="165"/>
        <end position="185"/>
    </location>
</feature>
<feature type="transmembrane region" description="Helical" evidence="1">
    <location>
        <begin position="249"/>
        <end position="269"/>
    </location>
</feature>
<feature type="domain" description="ABC transmembrane type-1" evidence="1">
    <location>
        <begin position="28"/>
        <end position="310"/>
    </location>
</feature>
<feature type="domain" description="ABC transporter" evidence="1">
    <location>
        <begin position="342"/>
        <end position="578"/>
    </location>
</feature>
<feature type="binding site" evidence="1">
    <location>
        <begin position="376"/>
        <end position="383"/>
    </location>
    <ligand>
        <name>ATP</name>
        <dbReference type="ChEBI" id="CHEBI:30616"/>
    </ligand>
</feature>
<reference key="1">
    <citation type="journal article" date="2003" name="Genome Res.">
        <title>Comparative genome analysis of Vibrio vulnificus, a marine pathogen.</title>
        <authorList>
            <person name="Chen C.-Y."/>
            <person name="Wu K.-M."/>
            <person name="Chang Y.-C."/>
            <person name="Chang C.-H."/>
            <person name="Tsai H.-C."/>
            <person name="Liao T.-L."/>
            <person name="Liu Y.-M."/>
            <person name="Chen H.-J."/>
            <person name="Shen A.B.-T."/>
            <person name="Li J.-C."/>
            <person name="Su T.-L."/>
            <person name="Shao C.-P."/>
            <person name="Lee C.-T."/>
            <person name="Hor L.-I."/>
            <person name="Tsai S.-F."/>
        </authorList>
    </citation>
    <scope>NUCLEOTIDE SEQUENCE [LARGE SCALE GENOMIC DNA]</scope>
    <source>
        <strain>YJ016</strain>
    </source>
</reference>
<evidence type="ECO:0000255" key="1">
    <source>
        <dbReference type="HAMAP-Rule" id="MF_01703"/>
    </source>
</evidence>
<evidence type="ECO:0000305" key="2"/>
<comment type="function">
    <text evidence="1">Involved in lipopolysaccharide (LPS) biosynthesis. Translocates lipid A-core from the inner to the outer leaflet of the inner membrane. Transmembrane domains (TMD) form a pore in the inner membrane and the ATP-binding domain (NBD) is responsible for energy generation.</text>
</comment>
<comment type="catalytic activity">
    <reaction evidence="1">
        <text>ATP + H2O + lipid A-core oligosaccharideSide 1 = ADP + phosphate + lipid A-core oligosaccharideSide 2.</text>
        <dbReference type="EC" id="7.5.2.6"/>
    </reaction>
</comment>
<comment type="subunit">
    <text evidence="1">Homodimer.</text>
</comment>
<comment type="subcellular location">
    <subcellularLocation>
        <location evidence="1">Cell inner membrane</location>
        <topology evidence="1">Multi-pass membrane protein</topology>
    </subcellularLocation>
</comment>
<comment type="domain">
    <text evidence="1">In MsbA the ATP-binding domain (NBD) and the transmembrane domain (TMD) are fused.</text>
</comment>
<comment type="similarity">
    <text evidence="1">Belongs to the ABC transporter superfamily. Lipid exporter (TC 3.A.1.106) family.</text>
</comment>
<comment type="sequence caution" evidence="2">
    <conflict type="erroneous initiation">
        <sequence resource="EMBL-CDS" id="BAC95120"/>
    </conflict>
</comment>
<organism>
    <name type="scientific">Vibrio vulnificus (strain YJ016)</name>
    <dbReference type="NCBI Taxonomy" id="196600"/>
    <lineage>
        <taxon>Bacteria</taxon>
        <taxon>Pseudomonadati</taxon>
        <taxon>Pseudomonadota</taxon>
        <taxon>Gammaproteobacteria</taxon>
        <taxon>Vibrionales</taxon>
        <taxon>Vibrionaceae</taxon>
        <taxon>Vibrio</taxon>
    </lineage>
</organism>
<keyword id="KW-0067">ATP-binding</keyword>
<keyword id="KW-0997">Cell inner membrane</keyword>
<keyword id="KW-1003">Cell membrane</keyword>
<keyword id="KW-0445">Lipid transport</keyword>
<keyword id="KW-0472">Membrane</keyword>
<keyword id="KW-0547">Nucleotide-binding</keyword>
<keyword id="KW-1278">Translocase</keyword>
<keyword id="KW-0812">Transmembrane</keyword>
<keyword id="KW-1133">Transmembrane helix</keyword>
<keyword id="KW-0813">Transport</keyword>
<accession>Q7MJ07</accession>